<feature type="chain" id="PRO_1000021579" description="Nicotinate-nucleotide--dimethylbenzimidazole phosphoribosyltransferase">
    <location>
        <begin position="1"/>
        <end position="351"/>
    </location>
</feature>
<feature type="active site" description="Proton acceptor" evidence="1">
    <location>
        <position position="317"/>
    </location>
</feature>
<keyword id="KW-0169">Cobalamin biosynthesis</keyword>
<keyword id="KW-0328">Glycosyltransferase</keyword>
<keyword id="KW-1185">Reference proteome</keyword>
<keyword id="KW-0808">Transferase</keyword>
<name>COBT_BRASO</name>
<gene>
    <name evidence="1" type="primary">cobT</name>
    <name type="ordered locus">BRADO4918</name>
</gene>
<accession>A4YXK4</accession>
<proteinExistence type="inferred from homology"/>
<reference key="1">
    <citation type="journal article" date="2007" name="Science">
        <title>Legumes symbioses: absence of nod genes in photosynthetic bradyrhizobia.</title>
        <authorList>
            <person name="Giraud E."/>
            <person name="Moulin L."/>
            <person name="Vallenet D."/>
            <person name="Barbe V."/>
            <person name="Cytryn E."/>
            <person name="Avarre J.-C."/>
            <person name="Jaubert M."/>
            <person name="Simon D."/>
            <person name="Cartieaux F."/>
            <person name="Prin Y."/>
            <person name="Bena G."/>
            <person name="Hannibal L."/>
            <person name="Fardoux J."/>
            <person name="Kojadinovic M."/>
            <person name="Vuillet L."/>
            <person name="Lajus A."/>
            <person name="Cruveiller S."/>
            <person name="Rouy Z."/>
            <person name="Mangenot S."/>
            <person name="Segurens B."/>
            <person name="Dossat C."/>
            <person name="Franck W.L."/>
            <person name="Chang W.-S."/>
            <person name="Saunders E."/>
            <person name="Bruce D."/>
            <person name="Richardson P."/>
            <person name="Normand P."/>
            <person name="Dreyfus B."/>
            <person name="Pignol D."/>
            <person name="Stacey G."/>
            <person name="Emerich D."/>
            <person name="Vermeglio A."/>
            <person name="Medigue C."/>
            <person name="Sadowsky M."/>
        </authorList>
    </citation>
    <scope>NUCLEOTIDE SEQUENCE [LARGE SCALE GENOMIC DNA]</scope>
    <source>
        <strain>ORS 278</strain>
    </source>
</reference>
<organism>
    <name type="scientific">Bradyrhizobium sp. (strain ORS 278)</name>
    <dbReference type="NCBI Taxonomy" id="114615"/>
    <lineage>
        <taxon>Bacteria</taxon>
        <taxon>Pseudomonadati</taxon>
        <taxon>Pseudomonadota</taxon>
        <taxon>Alphaproteobacteria</taxon>
        <taxon>Hyphomicrobiales</taxon>
        <taxon>Nitrobacteraceae</taxon>
        <taxon>Bradyrhizobium</taxon>
    </lineage>
</organism>
<protein>
    <recommendedName>
        <fullName evidence="1">Nicotinate-nucleotide--dimethylbenzimidazole phosphoribosyltransferase</fullName>
        <shortName evidence="1">NN:DBI PRT</shortName>
        <ecNumber evidence="1">2.4.2.21</ecNumber>
    </recommendedName>
    <alternativeName>
        <fullName evidence="1">N(1)-alpha-phosphoribosyltransferase</fullName>
    </alternativeName>
</protein>
<comment type="function">
    <text evidence="1">Catalyzes the synthesis of alpha-ribazole-5'-phosphate from nicotinate mononucleotide (NAMN) and 5,6-dimethylbenzimidazole (DMB).</text>
</comment>
<comment type="catalytic activity">
    <reaction evidence="1">
        <text>5,6-dimethylbenzimidazole + nicotinate beta-D-ribonucleotide = alpha-ribazole 5'-phosphate + nicotinate + H(+)</text>
        <dbReference type="Rhea" id="RHEA:11196"/>
        <dbReference type="ChEBI" id="CHEBI:15378"/>
        <dbReference type="ChEBI" id="CHEBI:15890"/>
        <dbReference type="ChEBI" id="CHEBI:32544"/>
        <dbReference type="ChEBI" id="CHEBI:57502"/>
        <dbReference type="ChEBI" id="CHEBI:57918"/>
        <dbReference type="EC" id="2.4.2.21"/>
    </reaction>
</comment>
<comment type="pathway">
    <text evidence="1">Nucleoside biosynthesis; alpha-ribazole biosynthesis; alpha-ribazole from 5,6-dimethylbenzimidazole: step 1/2.</text>
</comment>
<comment type="similarity">
    <text evidence="1">Belongs to the CobT family.</text>
</comment>
<evidence type="ECO:0000255" key="1">
    <source>
        <dbReference type="HAMAP-Rule" id="MF_00230"/>
    </source>
</evidence>
<dbReference type="EC" id="2.4.2.21" evidence="1"/>
<dbReference type="EMBL" id="CU234118">
    <property type="protein sequence ID" value="CAL78630.1"/>
    <property type="molecule type" value="Genomic_DNA"/>
</dbReference>
<dbReference type="RefSeq" id="WP_011927729.1">
    <property type="nucleotide sequence ID" value="NC_009445.1"/>
</dbReference>
<dbReference type="SMR" id="A4YXK4"/>
<dbReference type="STRING" id="114615.BRADO4918"/>
<dbReference type="KEGG" id="bra:BRADO4918"/>
<dbReference type="eggNOG" id="COG2038">
    <property type="taxonomic scope" value="Bacteria"/>
</dbReference>
<dbReference type="HOGENOM" id="CLU_002982_0_0_5"/>
<dbReference type="OrthoDB" id="9781491at2"/>
<dbReference type="UniPathway" id="UPA00061">
    <property type="reaction ID" value="UER00516"/>
</dbReference>
<dbReference type="Proteomes" id="UP000001994">
    <property type="component" value="Chromosome"/>
</dbReference>
<dbReference type="GO" id="GO:0008939">
    <property type="term" value="F:nicotinate-nucleotide-dimethylbenzimidazole phosphoribosyltransferase activity"/>
    <property type="evidence" value="ECO:0007669"/>
    <property type="project" value="UniProtKB-UniRule"/>
</dbReference>
<dbReference type="GO" id="GO:0009236">
    <property type="term" value="P:cobalamin biosynthetic process"/>
    <property type="evidence" value="ECO:0007669"/>
    <property type="project" value="UniProtKB-KW"/>
</dbReference>
<dbReference type="CDD" id="cd02439">
    <property type="entry name" value="DMB-PRT_CobT"/>
    <property type="match status" value="1"/>
</dbReference>
<dbReference type="FunFam" id="3.40.50.10210:FF:000001">
    <property type="entry name" value="Nicotinate-nucleotide--dimethylbenzimidazole phosphoribosyltransferase"/>
    <property type="match status" value="1"/>
</dbReference>
<dbReference type="Gene3D" id="1.10.1610.10">
    <property type="match status" value="1"/>
</dbReference>
<dbReference type="Gene3D" id="3.40.50.10210">
    <property type="match status" value="1"/>
</dbReference>
<dbReference type="HAMAP" id="MF_00230">
    <property type="entry name" value="CobT"/>
    <property type="match status" value="1"/>
</dbReference>
<dbReference type="InterPro" id="IPR003200">
    <property type="entry name" value="Nict_dMeBzImd_PRibTrfase"/>
</dbReference>
<dbReference type="InterPro" id="IPR017846">
    <property type="entry name" value="Nict_dMeBzImd_PRibTrfase_bact"/>
</dbReference>
<dbReference type="InterPro" id="IPR023195">
    <property type="entry name" value="Nict_dMeBzImd_PRibTrfase_N"/>
</dbReference>
<dbReference type="InterPro" id="IPR036087">
    <property type="entry name" value="Nict_dMeBzImd_PRibTrfase_sf"/>
</dbReference>
<dbReference type="NCBIfam" id="TIGR03160">
    <property type="entry name" value="cobT_DBIPRT"/>
    <property type="match status" value="1"/>
</dbReference>
<dbReference type="NCBIfam" id="NF000996">
    <property type="entry name" value="PRK00105.1"/>
    <property type="match status" value="1"/>
</dbReference>
<dbReference type="PANTHER" id="PTHR43463">
    <property type="entry name" value="NICOTINATE-NUCLEOTIDE--DIMETHYLBENZIMIDAZOLE PHOSPHORIBOSYLTRANSFERASE"/>
    <property type="match status" value="1"/>
</dbReference>
<dbReference type="PANTHER" id="PTHR43463:SF1">
    <property type="entry name" value="NICOTINATE-NUCLEOTIDE--DIMETHYLBENZIMIDAZOLE PHOSPHORIBOSYLTRANSFERASE"/>
    <property type="match status" value="1"/>
</dbReference>
<dbReference type="Pfam" id="PF02277">
    <property type="entry name" value="DBI_PRT"/>
    <property type="match status" value="1"/>
</dbReference>
<dbReference type="SUPFAM" id="SSF52733">
    <property type="entry name" value="Nicotinate mononucleotide:5,6-dimethylbenzimidazole phosphoribosyltransferase (CobT)"/>
    <property type="match status" value="1"/>
</dbReference>
<sequence length="351" mass="35772">MLPDWINSECPAPSGAHRESALARQAQLTKPLGALGRLEEVAVELAALQAAEKPAAERVPVVLFAGDHGIAAQGVSAYPPEVTVQMLHNFAGGGAAIAVLAHSLGCPLEVVDVGTLADGQMRGVVVDKPRRGTRDFSVEQALTPADVAFVSEAGLRAVARQADHAPDLVIFGEMGIGNTTSAAAIAAALLACAPADIVGSGTGLDAEGRARKAKVIEDALTRHGLTAATPVAEVLAAVGGLEIIAMAGAIVAAAQRSWPVLVDGFIVSVAALVATRLNPSCRPWLLFSHRSAERGHAVVLDALGARPLIDLDLRLGEASGAATALPILRLACALHNGMATFAEAAVSGREA</sequence>